<dbReference type="EC" id="3.6.5.n1" evidence="1"/>
<dbReference type="EMBL" id="BA000037">
    <property type="protein sequence ID" value="BAC95597.1"/>
    <property type="molecule type" value="Genomic_DNA"/>
</dbReference>
<dbReference type="RefSeq" id="WP_011079498.1">
    <property type="nucleotide sequence ID" value="NC_005139.1"/>
</dbReference>
<dbReference type="SMR" id="Q7MHN6"/>
<dbReference type="STRING" id="672.VV93_v1c25420"/>
<dbReference type="KEGG" id="vvy:VV2833"/>
<dbReference type="PATRIC" id="fig|196600.6.peg.2822"/>
<dbReference type="eggNOG" id="COG0481">
    <property type="taxonomic scope" value="Bacteria"/>
</dbReference>
<dbReference type="HOGENOM" id="CLU_009995_3_3_6"/>
<dbReference type="Proteomes" id="UP000002675">
    <property type="component" value="Chromosome I"/>
</dbReference>
<dbReference type="GO" id="GO:0005886">
    <property type="term" value="C:plasma membrane"/>
    <property type="evidence" value="ECO:0007669"/>
    <property type="project" value="UniProtKB-SubCell"/>
</dbReference>
<dbReference type="GO" id="GO:0005525">
    <property type="term" value="F:GTP binding"/>
    <property type="evidence" value="ECO:0007669"/>
    <property type="project" value="UniProtKB-UniRule"/>
</dbReference>
<dbReference type="GO" id="GO:0003924">
    <property type="term" value="F:GTPase activity"/>
    <property type="evidence" value="ECO:0007669"/>
    <property type="project" value="UniProtKB-UniRule"/>
</dbReference>
<dbReference type="GO" id="GO:0097216">
    <property type="term" value="F:guanosine tetraphosphate binding"/>
    <property type="evidence" value="ECO:0007669"/>
    <property type="project" value="UniProtKB-ARBA"/>
</dbReference>
<dbReference type="GO" id="GO:0043022">
    <property type="term" value="F:ribosome binding"/>
    <property type="evidence" value="ECO:0007669"/>
    <property type="project" value="UniProtKB-UniRule"/>
</dbReference>
<dbReference type="GO" id="GO:0003746">
    <property type="term" value="F:translation elongation factor activity"/>
    <property type="evidence" value="ECO:0007669"/>
    <property type="project" value="UniProtKB-UniRule"/>
</dbReference>
<dbReference type="GO" id="GO:0045727">
    <property type="term" value="P:positive regulation of translation"/>
    <property type="evidence" value="ECO:0007669"/>
    <property type="project" value="UniProtKB-UniRule"/>
</dbReference>
<dbReference type="CDD" id="cd03699">
    <property type="entry name" value="EF4_II"/>
    <property type="match status" value="1"/>
</dbReference>
<dbReference type="CDD" id="cd16260">
    <property type="entry name" value="EF4_III"/>
    <property type="match status" value="1"/>
</dbReference>
<dbReference type="CDD" id="cd01890">
    <property type="entry name" value="LepA"/>
    <property type="match status" value="1"/>
</dbReference>
<dbReference type="CDD" id="cd03709">
    <property type="entry name" value="lepA_C"/>
    <property type="match status" value="1"/>
</dbReference>
<dbReference type="FunFam" id="3.40.50.300:FF:000078">
    <property type="entry name" value="Elongation factor 4"/>
    <property type="match status" value="1"/>
</dbReference>
<dbReference type="FunFam" id="2.40.30.10:FF:000015">
    <property type="entry name" value="Translation factor GUF1, mitochondrial"/>
    <property type="match status" value="1"/>
</dbReference>
<dbReference type="FunFam" id="3.30.70.240:FF:000007">
    <property type="entry name" value="Translation factor GUF1, mitochondrial"/>
    <property type="match status" value="1"/>
</dbReference>
<dbReference type="FunFam" id="3.30.70.2570:FF:000001">
    <property type="entry name" value="Translation factor GUF1, mitochondrial"/>
    <property type="match status" value="1"/>
</dbReference>
<dbReference type="FunFam" id="3.30.70.870:FF:000004">
    <property type="entry name" value="Translation factor GUF1, mitochondrial"/>
    <property type="match status" value="1"/>
</dbReference>
<dbReference type="Gene3D" id="3.30.70.240">
    <property type="match status" value="1"/>
</dbReference>
<dbReference type="Gene3D" id="3.30.70.2570">
    <property type="entry name" value="Elongation factor 4, C-terminal domain"/>
    <property type="match status" value="1"/>
</dbReference>
<dbReference type="Gene3D" id="3.30.70.870">
    <property type="entry name" value="Elongation Factor G (Translational Gtpase), domain 3"/>
    <property type="match status" value="1"/>
</dbReference>
<dbReference type="Gene3D" id="3.40.50.300">
    <property type="entry name" value="P-loop containing nucleotide triphosphate hydrolases"/>
    <property type="match status" value="1"/>
</dbReference>
<dbReference type="Gene3D" id="2.40.30.10">
    <property type="entry name" value="Translation factors"/>
    <property type="match status" value="1"/>
</dbReference>
<dbReference type="HAMAP" id="MF_00071">
    <property type="entry name" value="LepA"/>
    <property type="match status" value="1"/>
</dbReference>
<dbReference type="InterPro" id="IPR006297">
    <property type="entry name" value="EF-4"/>
</dbReference>
<dbReference type="InterPro" id="IPR035647">
    <property type="entry name" value="EFG_III/V"/>
</dbReference>
<dbReference type="InterPro" id="IPR000640">
    <property type="entry name" value="EFG_V-like"/>
</dbReference>
<dbReference type="InterPro" id="IPR004161">
    <property type="entry name" value="EFTu-like_2"/>
</dbReference>
<dbReference type="InterPro" id="IPR031157">
    <property type="entry name" value="G_TR_CS"/>
</dbReference>
<dbReference type="InterPro" id="IPR038363">
    <property type="entry name" value="LepA_C_sf"/>
</dbReference>
<dbReference type="InterPro" id="IPR013842">
    <property type="entry name" value="LepA_CTD"/>
</dbReference>
<dbReference type="InterPro" id="IPR035654">
    <property type="entry name" value="LepA_IV"/>
</dbReference>
<dbReference type="InterPro" id="IPR027417">
    <property type="entry name" value="P-loop_NTPase"/>
</dbReference>
<dbReference type="InterPro" id="IPR005225">
    <property type="entry name" value="Small_GTP-bd"/>
</dbReference>
<dbReference type="InterPro" id="IPR000795">
    <property type="entry name" value="T_Tr_GTP-bd_dom"/>
</dbReference>
<dbReference type="InterPro" id="IPR009000">
    <property type="entry name" value="Transl_B-barrel_sf"/>
</dbReference>
<dbReference type="NCBIfam" id="TIGR01393">
    <property type="entry name" value="lepA"/>
    <property type="match status" value="1"/>
</dbReference>
<dbReference type="NCBIfam" id="TIGR00231">
    <property type="entry name" value="small_GTP"/>
    <property type="match status" value="1"/>
</dbReference>
<dbReference type="PANTHER" id="PTHR43512:SF4">
    <property type="entry name" value="TRANSLATION FACTOR GUF1 HOMOLOG, CHLOROPLASTIC"/>
    <property type="match status" value="1"/>
</dbReference>
<dbReference type="PANTHER" id="PTHR43512">
    <property type="entry name" value="TRANSLATION FACTOR GUF1-RELATED"/>
    <property type="match status" value="1"/>
</dbReference>
<dbReference type="Pfam" id="PF00679">
    <property type="entry name" value="EFG_C"/>
    <property type="match status" value="1"/>
</dbReference>
<dbReference type="Pfam" id="PF00009">
    <property type="entry name" value="GTP_EFTU"/>
    <property type="match status" value="1"/>
</dbReference>
<dbReference type="Pfam" id="PF03144">
    <property type="entry name" value="GTP_EFTU_D2"/>
    <property type="match status" value="1"/>
</dbReference>
<dbReference type="Pfam" id="PF06421">
    <property type="entry name" value="LepA_C"/>
    <property type="match status" value="1"/>
</dbReference>
<dbReference type="PRINTS" id="PR00315">
    <property type="entry name" value="ELONGATNFCT"/>
</dbReference>
<dbReference type="SMART" id="SM00838">
    <property type="entry name" value="EFG_C"/>
    <property type="match status" value="1"/>
</dbReference>
<dbReference type="SUPFAM" id="SSF54980">
    <property type="entry name" value="EF-G C-terminal domain-like"/>
    <property type="match status" value="2"/>
</dbReference>
<dbReference type="SUPFAM" id="SSF52540">
    <property type="entry name" value="P-loop containing nucleoside triphosphate hydrolases"/>
    <property type="match status" value="1"/>
</dbReference>
<dbReference type="SUPFAM" id="SSF50447">
    <property type="entry name" value="Translation proteins"/>
    <property type="match status" value="1"/>
</dbReference>
<dbReference type="PROSITE" id="PS00301">
    <property type="entry name" value="G_TR_1"/>
    <property type="match status" value="1"/>
</dbReference>
<dbReference type="PROSITE" id="PS51722">
    <property type="entry name" value="G_TR_2"/>
    <property type="match status" value="1"/>
</dbReference>
<keyword id="KW-0997">Cell inner membrane</keyword>
<keyword id="KW-1003">Cell membrane</keyword>
<keyword id="KW-0342">GTP-binding</keyword>
<keyword id="KW-0378">Hydrolase</keyword>
<keyword id="KW-0472">Membrane</keyword>
<keyword id="KW-0547">Nucleotide-binding</keyword>
<keyword id="KW-0648">Protein biosynthesis</keyword>
<protein>
    <recommendedName>
        <fullName evidence="1">Elongation factor 4</fullName>
        <shortName evidence="1">EF-4</shortName>
        <ecNumber evidence="1">3.6.5.n1</ecNumber>
    </recommendedName>
    <alternativeName>
        <fullName evidence="1">Ribosomal back-translocase LepA</fullName>
    </alternativeName>
</protein>
<reference key="1">
    <citation type="journal article" date="2003" name="Genome Res.">
        <title>Comparative genome analysis of Vibrio vulnificus, a marine pathogen.</title>
        <authorList>
            <person name="Chen C.-Y."/>
            <person name="Wu K.-M."/>
            <person name="Chang Y.-C."/>
            <person name="Chang C.-H."/>
            <person name="Tsai H.-C."/>
            <person name="Liao T.-L."/>
            <person name="Liu Y.-M."/>
            <person name="Chen H.-J."/>
            <person name="Shen A.B.-T."/>
            <person name="Li J.-C."/>
            <person name="Su T.-L."/>
            <person name="Shao C.-P."/>
            <person name="Lee C.-T."/>
            <person name="Hor L.-I."/>
            <person name="Tsai S.-F."/>
        </authorList>
    </citation>
    <scope>NUCLEOTIDE SEQUENCE [LARGE SCALE GENOMIC DNA]</scope>
    <source>
        <strain>YJ016</strain>
    </source>
</reference>
<name>LEPA_VIBVY</name>
<sequence>MKHIRNFSIIAHIDHGKSTLSDRLIQVCGGLSDREMAEQVLDSMELERERGITIKAQSVTLDYKAQDGETYQLNFIDTPGHVDFSYEVSRSLAACEGALLVVDAGQGVEAQTLANCYTAIEMDLEVVPILNKIDLPAAEPERVAEEIEDIVGIDAIDAVRCSAKTGLGVDDVLEKIVSAIPAPEGDPEAPLQALIIDSWFDNYLGVVSLVRIKHGKLKKNDKIKVMSTGQVWGVDRLGIFTPKQIDTTELNTGEVGWVVCGIKDILGAPVGDTLTLAKNGAEKALPGFKKVKPQVYAGLFPVSSDDYEAFRDALGKLSLNDASLFYEPENSAALGFGFRCGFLGMLHMEIIQERLEREYDLDLITTAPTVVYEVLTTSKQTIYVDSPAKLPAVNDVAEIREPIARCNILVPADYLGNVITLCIEKRGTQVDMVYHGNQVALTYDIPMAEVVLDFFDRLKSTSRGYASLDYGFQRFEESNMVRVDVLLNGDKVDALAIITHKDQSQTRGRQLVEKMKEFIPRQMFDIAIQAAIGNHIIARSTVKQLRKNVLAKCYGGDVSRKKKLLKKQKEGKKRMKQIGNVELPQEAFLAILHVGKD</sequence>
<proteinExistence type="inferred from homology"/>
<evidence type="ECO:0000255" key="1">
    <source>
        <dbReference type="HAMAP-Rule" id="MF_00071"/>
    </source>
</evidence>
<accession>Q7MHN6</accession>
<organism>
    <name type="scientific">Vibrio vulnificus (strain YJ016)</name>
    <dbReference type="NCBI Taxonomy" id="196600"/>
    <lineage>
        <taxon>Bacteria</taxon>
        <taxon>Pseudomonadati</taxon>
        <taxon>Pseudomonadota</taxon>
        <taxon>Gammaproteobacteria</taxon>
        <taxon>Vibrionales</taxon>
        <taxon>Vibrionaceae</taxon>
        <taxon>Vibrio</taxon>
    </lineage>
</organism>
<comment type="function">
    <text evidence="1">Required for accurate and efficient protein synthesis under certain stress conditions. May act as a fidelity factor of the translation reaction, by catalyzing a one-codon backward translocation of tRNAs on improperly translocated ribosomes. Back-translocation proceeds from a post-translocation (POST) complex to a pre-translocation (PRE) complex, thus giving elongation factor G a second chance to translocate the tRNAs correctly. Binds to ribosomes in a GTP-dependent manner.</text>
</comment>
<comment type="catalytic activity">
    <reaction evidence="1">
        <text>GTP + H2O = GDP + phosphate + H(+)</text>
        <dbReference type="Rhea" id="RHEA:19669"/>
        <dbReference type="ChEBI" id="CHEBI:15377"/>
        <dbReference type="ChEBI" id="CHEBI:15378"/>
        <dbReference type="ChEBI" id="CHEBI:37565"/>
        <dbReference type="ChEBI" id="CHEBI:43474"/>
        <dbReference type="ChEBI" id="CHEBI:58189"/>
        <dbReference type="EC" id="3.6.5.n1"/>
    </reaction>
</comment>
<comment type="subcellular location">
    <subcellularLocation>
        <location evidence="1">Cell inner membrane</location>
        <topology evidence="1">Peripheral membrane protein</topology>
        <orientation evidence="1">Cytoplasmic side</orientation>
    </subcellularLocation>
</comment>
<comment type="similarity">
    <text evidence="1">Belongs to the TRAFAC class translation factor GTPase superfamily. Classic translation factor GTPase family. LepA subfamily.</text>
</comment>
<feature type="chain" id="PRO_0000176373" description="Elongation factor 4">
    <location>
        <begin position="1"/>
        <end position="597"/>
    </location>
</feature>
<feature type="domain" description="tr-type G">
    <location>
        <begin position="2"/>
        <end position="184"/>
    </location>
</feature>
<feature type="binding site" evidence="1">
    <location>
        <begin position="14"/>
        <end position="19"/>
    </location>
    <ligand>
        <name>GTP</name>
        <dbReference type="ChEBI" id="CHEBI:37565"/>
    </ligand>
</feature>
<feature type="binding site" evidence="1">
    <location>
        <begin position="131"/>
        <end position="134"/>
    </location>
    <ligand>
        <name>GTP</name>
        <dbReference type="ChEBI" id="CHEBI:37565"/>
    </ligand>
</feature>
<gene>
    <name evidence="1" type="primary">lepA</name>
    <name type="ordered locus">VV2833</name>
</gene>